<evidence type="ECO:0000250" key="1">
    <source>
        <dbReference type="UniProtKB" id="P0ABH0"/>
    </source>
</evidence>
<evidence type="ECO:0000255" key="2">
    <source>
        <dbReference type="HAMAP-Rule" id="MF_02033"/>
    </source>
</evidence>
<evidence type="ECO:0000256" key="3">
    <source>
        <dbReference type="SAM" id="MobiDB-lite"/>
    </source>
</evidence>
<evidence type="ECO:0000269" key="4">
    <source>
    </source>
</evidence>
<evidence type="ECO:0000269" key="5">
    <source>
    </source>
</evidence>
<evidence type="ECO:0000269" key="6">
    <source>
    </source>
</evidence>
<evidence type="ECO:0000269" key="7">
    <source>
    </source>
</evidence>
<evidence type="ECO:0000305" key="8"/>
<evidence type="ECO:0000305" key="9">
    <source>
    </source>
</evidence>
<evidence type="ECO:0000305" key="10">
    <source>
    </source>
</evidence>
<evidence type="ECO:0000305" key="11">
    <source>
    </source>
</evidence>
<proteinExistence type="evidence at protein level"/>
<keyword id="KW-0131">Cell cycle</keyword>
<keyword id="KW-0132">Cell division</keyword>
<keyword id="KW-1003">Cell membrane</keyword>
<keyword id="KW-0472">Membrane</keyword>
<keyword id="KW-1185">Reference proteome</keyword>
<keyword id="KW-0749">Sporulation</keyword>
<organism>
    <name type="scientific">Bacillus subtilis (strain 168)</name>
    <dbReference type="NCBI Taxonomy" id="224308"/>
    <lineage>
        <taxon>Bacteria</taxon>
        <taxon>Bacillati</taxon>
        <taxon>Bacillota</taxon>
        <taxon>Bacilli</taxon>
        <taxon>Bacillales</taxon>
        <taxon>Bacillaceae</taxon>
        <taxon>Bacillus</taxon>
    </lineage>
</organism>
<sequence length="440" mass="48192">MNNNELYVSLDIGTSNTKVIVGEMTDDSLNIIGVGNVPSEGLKKGSIVDIDETVHSIRKAFDQAERMVGFPLRKAIVGVNGNYINIQDTNGVVAVSSENKEIQVEDVRRVMEAAQVVSVPHEQLIVDVIPKQFIVDGRDEITDPKKMLGVRLEVEGTLITGSKTILHNLLRCVERAGIEITDICLQPLAAGSAALSKDEKNLGVALIDIGGGSTTIAVFQNGHLTSTRVIPLGGENITKDISIGLRTSTEEAERVKKQLGHAYYDEASEDEIFEVTVIGTNQKQTFTQQEAANIIEARVEEILEIVSEELRSMGITDLPGGFVLTGGQAAMPGVMSLAQDVLQNNVRVASPNYIGVRDPQYMTGVGLIQFACRNARIQGRKIGFKMPEEAIQEIAVSSSEEQEQHHHQNEVQQRPKGKQKTQAEHNKQSKMKKLLSMFWE</sequence>
<gene>
    <name evidence="2" type="primary">ftsA</name>
    <name type="ordered locus">BSU15280</name>
</gene>
<feature type="chain" id="PRO_0000062729" description="Cell division protein FtsA">
    <location>
        <begin position="1"/>
        <end position="440"/>
    </location>
</feature>
<feature type="region of interest" description="Disordered" evidence="3">
    <location>
        <begin position="396"/>
        <end position="440"/>
    </location>
</feature>
<feature type="sequence conflict" description="In Ref. 1; AAA22456." evidence="8" ref="1">
    <original>I</original>
    <variation>L</variation>
    <location>
        <position position="12"/>
    </location>
</feature>
<feature type="sequence conflict" description="In Ref. 1; AAA22456." evidence="8" ref="1">
    <original>D</original>
    <variation>G</variation>
    <location>
        <position position="26"/>
    </location>
</feature>
<feature type="sequence conflict" description="In Ref. 1; AAA22456." evidence="8" ref="1">
    <original>E</original>
    <variation>A</variation>
    <location>
        <position position="112"/>
    </location>
</feature>
<feature type="sequence conflict" description="In Ref. 1; AAA22456." evidence="8" ref="1">
    <original>AS</original>
    <variation>QG</variation>
    <location>
        <begin position="349"/>
        <end position="350"/>
    </location>
</feature>
<reference key="1">
    <citation type="journal article" date="1988" name="J. Bacteriol.">
        <title>Cloning and characterization of Bacillus subtilis homologs of Escherichia coli cell division genes ftsZ and ftsA.</title>
        <authorList>
            <person name="Beall B."/>
            <person name="Lowe M."/>
            <person name="Lutkenhaus J."/>
        </authorList>
    </citation>
    <scope>NUCLEOTIDE SEQUENCE [GENOMIC DNA]</scope>
</reference>
<reference key="2">
    <citation type="journal article" date="1997" name="Nature">
        <title>The complete genome sequence of the Gram-positive bacterium Bacillus subtilis.</title>
        <authorList>
            <person name="Kunst F."/>
            <person name="Ogasawara N."/>
            <person name="Moszer I."/>
            <person name="Albertini A.M."/>
            <person name="Alloni G."/>
            <person name="Azevedo V."/>
            <person name="Bertero M.G."/>
            <person name="Bessieres P."/>
            <person name="Bolotin A."/>
            <person name="Borchert S."/>
            <person name="Borriss R."/>
            <person name="Boursier L."/>
            <person name="Brans A."/>
            <person name="Braun M."/>
            <person name="Brignell S.C."/>
            <person name="Bron S."/>
            <person name="Brouillet S."/>
            <person name="Bruschi C.V."/>
            <person name="Caldwell B."/>
            <person name="Capuano V."/>
            <person name="Carter N.M."/>
            <person name="Choi S.-K."/>
            <person name="Codani J.-J."/>
            <person name="Connerton I.F."/>
            <person name="Cummings N.J."/>
            <person name="Daniel R.A."/>
            <person name="Denizot F."/>
            <person name="Devine K.M."/>
            <person name="Duesterhoeft A."/>
            <person name="Ehrlich S.D."/>
            <person name="Emmerson P.T."/>
            <person name="Entian K.-D."/>
            <person name="Errington J."/>
            <person name="Fabret C."/>
            <person name="Ferrari E."/>
            <person name="Foulger D."/>
            <person name="Fritz C."/>
            <person name="Fujita M."/>
            <person name="Fujita Y."/>
            <person name="Fuma S."/>
            <person name="Galizzi A."/>
            <person name="Galleron N."/>
            <person name="Ghim S.-Y."/>
            <person name="Glaser P."/>
            <person name="Goffeau A."/>
            <person name="Golightly E.J."/>
            <person name="Grandi G."/>
            <person name="Guiseppi G."/>
            <person name="Guy B.J."/>
            <person name="Haga K."/>
            <person name="Haiech J."/>
            <person name="Harwood C.R."/>
            <person name="Henaut A."/>
            <person name="Hilbert H."/>
            <person name="Holsappel S."/>
            <person name="Hosono S."/>
            <person name="Hullo M.-F."/>
            <person name="Itaya M."/>
            <person name="Jones L.-M."/>
            <person name="Joris B."/>
            <person name="Karamata D."/>
            <person name="Kasahara Y."/>
            <person name="Klaerr-Blanchard M."/>
            <person name="Klein C."/>
            <person name="Kobayashi Y."/>
            <person name="Koetter P."/>
            <person name="Koningstein G."/>
            <person name="Krogh S."/>
            <person name="Kumano M."/>
            <person name="Kurita K."/>
            <person name="Lapidus A."/>
            <person name="Lardinois S."/>
            <person name="Lauber J."/>
            <person name="Lazarevic V."/>
            <person name="Lee S.-M."/>
            <person name="Levine A."/>
            <person name="Liu H."/>
            <person name="Masuda S."/>
            <person name="Mauel C."/>
            <person name="Medigue C."/>
            <person name="Medina N."/>
            <person name="Mellado R.P."/>
            <person name="Mizuno M."/>
            <person name="Moestl D."/>
            <person name="Nakai S."/>
            <person name="Noback M."/>
            <person name="Noone D."/>
            <person name="O'Reilly M."/>
            <person name="Ogawa K."/>
            <person name="Ogiwara A."/>
            <person name="Oudega B."/>
            <person name="Park S.-H."/>
            <person name="Parro V."/>
            <person name="Pohl T.M."/>
            <person name="Portetelle D."/>
            <person name="Porwollik S."/>
            <person name="Prescott A.M."/>
            <person name="Presecan E."/>
            <person name="Pujic P."/>
            <person name="Purnelle B."/>
            <person name="Rapoport G."/>
            <person name="Rey M."/>
            <person name="Reynolds S."/>
            <person name="Rieger M."/>
            <person name="Rivolta C."/>
            <person name="Rocha E."/>
            <person name="Roche B."/>
            <person name="Rose M."/>
            <person name="Sadaie Y."/>
            <person name="Sato T."/>
            <person name="Scanlan E."/>
            <person name="Schleich S."/>
            <person name="Schroeter R."/>
            <person name="Scoffone F."/>
            <person name="Sekiguchi J."/>
            <person name="Sekowska A."/>
            <person name="Seror S.J."/>
            <person name="Serror P."/>
            <person name="Shin B.-S."/>
            <person name="Soldo B."/>
            <person name="Sorokin A."/>
            <person name="Tacconi E."/>
            <person name="Takagi T."/>
            <person name="Takahashi H."/>
            <person name="Takemaru K."/>
            <person name="Takeuchi M."/>
            <person name="Tamakoshi A."/>
            <person name="Tanaka T."/>
            <person name="Terpstra P."/>
            <person name="Tognoni A."/>
            <person name="Tosato V."/>
            <person name="Uchiyama S."/>
            <person name="Vandenbol M."/>
            <person name="Vannier F."/>
            <person name="Vassarotti A."/>
            <person name="Viari A."/>
            <person name="Wambutt R."/>
            <person name="Wedler E."/>
            <person name="Wedler H."/>
            <person name="Weitzenegger T."/>
            <person name="Winters P."/>
            <person name="Wipat A."/>
            <person name="Yamamoto H."/>
            <person name="Yamane K."/>
            <person name="Yasumoto K."/>
            <person name="Yata K."/>
            <person name="Yoshida K."/>
            <person name="Yoshikawa H.-F."/>
            <person name="Zumstein E."/>
            <person name="Yoshikawa H."/>
            <person name="Danchin A."/>
        </authorList>
    </citation>
    <scope>NUCLEOTIDE SEQUENCE [LARGE SCALE GENOMIC DNA]</scope>
    <source>
        <strain>168</strain>
    </source>
</reference>
<reference key="3">
    <citation type="journal article" date="2009" name="Microbiology">
        <title>From a consortium sequence to a unified sequence: the Bacillus subtilis 168 reference genome a decade later.</title>
        <authorList>
            <person name="Barbe V."/>
            <person name="Cruveiller S."/>
            <person name="Kunst F."/>
            <person name="Lenoble P."/>
            <person name="Meurice G."/>
            <person name="Sekowska A."/>
            <person name="Vallenet D."/>
            <person name="Wang T."/>
            <person name="Moszer I."/>
            <person name="Medigue C."/>
            <person name="Danchin A."/>
        </authorList>
    </citation>
    <scope>SEQUENCE REVISION TO 12; 26; 112 AND 349-350</scope>
</reference>
<reference key="4">
    <citation type="journal article" date="1992" name="J. Mol. Biol.">
        <title>Developmental regulation of transcription of the Bacillus subtilis ftsAZ operon.</title>
        <authorList>
            <person name="Gonzy-Treboul G."/>
            <person name="Karmazyn-Campelli C."/>
            <person name="Stragier P."/>
        </authorList>
    </citation>
    <scope>NUCLEOTIDE SEQUENCE [GENOMIC DNA] OF 1-14</scope>
    <scope>INDUCTION</scope>
    <source>
        <strain>168 / JH642</strain>
    </source>
</reference>
<reference key="5">
    <citation type="journal article" date="1992" name="J. Bacteriol.">
        <title>Regulation of transcription of the cell division gene ftsA during sporulation of Bacillus subtilis.</title>
        <authorList>
            <person name="Gholamhoseinian A."/>
            <person name="Shen Z."/>
            <person name="Wu J.J."/>
            <person name="Piggot P."/>
        </authorList>
    </citation>
    <scope>NUCLEOTIDE SEQUENCE [GENOMIC DNA] OF 1-8</scope>
    <scope>INDUCTION</scope>
</reference>
<reference key="6">
    <citation type="journal article" date="2001" name="Mol. Microbiol.">
        <title>Cytological and biochemical characterization of the FtsA cell division protein of Bacillus subtilis.</title>
        <authorList>
            <person name="Feucht A."/>
            <person name="Lucet I."/>
            <person name="Yudkin M.D."/>
            <person name="Errington J."/>
        </authorList>
    </citation>
    <scope>FUNCTION</scope>
    <scope>SUBUNIT</scope>
    <scope>SUBCELLULAR LOCATION</scope>
</reference>
<reference key="7">
    <citation type="journal article" date="2005" name="J. Bacteriol.">
        <title>Cell division in Bacillus subtilis: FtsZ and FtsA association is Z-ring independent, and FtsA is required for efficient midcell Z-Ring assembly.</title>
        <authorList>
            <person name="Jensen S.O."/>
            <person name="Thompson L.S."/>
            <person name="Harry E.J."/>
        </authorList>
    </citation>
    <scope>FUNCTION</scope>
    <scope>INTERACTION WITH FTSZ</scope>
</reference>
<protein>
    <recommendedName>
        <fullName evidence="2">Cell division protein FtsA</fullName>
    </recommendedName>
</protein>
<comment type="function">
    <text evidence="1 4 6 9 11">Cell division protein that is required for the assembly of the Z ring (PubMed:16159787). May serve as a membrane anchor for the Z ring (By similarity). Binds and hydrolyzes ATP (PubMed:11298280). Also involved in sporulation (Probable).</text>
</comment>
<comment type="subunit">
    <text evidence="4 6">Homodimer (PubMed:11298280). Interacts with FtsZ (PubMed:16159787).</text>
</comment>
<comment type="interaction">
    <interactant intactId="EBI-2122615">
        <id>P28264</id>
    </interactant>
    <interactant intactId="EBI-1567579">
        <id>O34894</id>
        <label>ezrA</label>
    </interactant>
    <organismsDiffer>false</organismsDiffer>
    <experiments>5</experiments>
</comment>
<comment type="interaction">
    <interactant intactId="EBI-2122615">
        <id>P28264</id>
    </interactant>
    <interactant intactId="EBI-1569853">
        <id>P17865</id>
        <label>ftsZ</label>
    </interactant>
    <organismsDiffer>false</organismsDiffer>
    <experiments>7</experiments>
</comment>
<comment type="subcellular location">
    <subcellularLocation>
        <location evidence="1">Cell membrane</location>
        <topology evidence="1">Peripheral membrane protein</topology>
        <orientation evidence="1">Cytoplasmic side</orientation>
    </subcellularLocation>
    <text evidence="1 4">Localizes to the Z ring in an FtsZ-dependent manner (PubMed:11298280). In sporulating cells, preferentially localizes to only one of the two potential polar division sites (PubMed:11298280). Targeted to the membrane through a conserved C-terminal amphipathic helix (By similarity).</text>
</comment>
<comment type="induction">
    <text evidence="5 7">Transcription is controlled by three promoters. Two of these promoters, P1 and P3 are expressed mainly during vegetative growth. The third one, P2, is up-regulated around the onset of sporulation.</text>
</comment>
<comment type="miscellaneous">
    <text evidence="10">In B.subtilis, unlike the situation in E.coli, the role of FtsA in the recruitment of other division proteins to the division site appears to be an indirect one, through ensuring that FtsZ forms a proper ring.</text>
</comment>
<comment type="similarity">
    <text evidence="2 8">Belongs to the FtsA/MreB family.</text>
</comment>
<accession>P28264</accession>
<accession>Q45573</accession>
<dbReference type="EMBL" id="M22630">
    <property type="protein sequence ID" value="AAA22456.1"/>
    <property type="molecule type" value="Genomic_DNA"/>
</dbReference>
<dbReference type="EMBL" id="AL009126">
    <property type="protein sequence ID" value="CAB13401.2"/>
    <property type="molecule type" value="Genomic_DNA"/>
</dbReference>
<dbReference type="EMBL" id="X66239">
    <property type="protein sequence ID" value="CAA46968.1"/>
    <property type="molecule type" value="Genomic_DNA"/>
</dbReference>
<dbReference type="EMBL" id="S39431">
    <property type="protein sequence ID" value="AAD13818.1"/>
    <property type="molecule type" value="Genomic_DNA"/>
</dbReference>
<dbReference type="PIR" id="I39847">
    <property type="entry name" value="I39847"/>
</dbReference>
<dbReference type="RefSeq" id="NP_389411.2">
    <property type="nucleotide sequence ID" value="NC_000964.3"/>
</dbReference>
<dbReference type="RefSeq" id="WP_009967186.1">
    <property type="nucleotide sequence ID" value="NZ_OZ025638.1"/>
</dbReference>
<dbReference type="SMR" id="P28264"/>
<dbReference type="FunCoup" id="P28264">
    <property type="interactions" value="288"/>
</dbReference>
<dbReference type="IntAct" id="P28264">
    <property type="interactions" value="25"/>
</dbReference>
<dbReference type="STRING" id="224308.BSU15280"/>
<dbReference type="jPOST" id="P28264"/>
<dbReference type="PaxDb" id="224308-BSU15280"/>
<dbReference type="EnsemblBacteria" id="CAB13401">
    <property type="protein sequence ID" value="CAB13401"/>
    <property type="gene ID" value="BSU_15280"/>
</dbReference>
<dbReference type="GeneID" id="936145"/>
<dbReference type="KEGG" id="bsu:BSU15280"/>
<dbReference type="PATRIC" id="fig|224308.179.peg.1666"/>
<dbReference type="eggNOG" id="COG0849">
    <property type="taxonomic scope" value="Bacteria"/>
</dbReference>
<dbReference type="InParanoid" id="P28264"/>
<dbReference type="OrthoDB" id="9768127at2"/>
<dbReference type="PhylomeDB" id="P28264"/>
<dbReference type="BioCyc" id="BSUB:BSU15280-MONOMER"/>
<dbReference type="Proteomes" id="UP000001570">
    <property type="component" value="Chromosome"/>
</dbReference>
<dbReference type="GO" id="GO:0032153">
    <property type="term" value="C:cell division site"/>
    <property type="evidence" value="ECO:0000318"/>
    <property type="project" value="GO_Central"/>
</dbReference>
<dbReference type="GO" id="GO:0009898">
    <property type="term" value="C:cytoplasmic side of plasma membrane"/>
    <property type="evidence" value="ECO:0000318"/>
    <property type="project" value="GO_Central"/>
</dbReference>
<dbReference type="GO" id="GO:0016887">
    <property type="term" value="F:ATP hydrolysis activity"/>
    <property type="evidence" value="ECO:0000314"/>
    <property type="project" value="CACAO"/>
</dbReference>
<dbReference type="GO" id="GO:0051301">
    <property type="term" value="P:cell division"/>
    <property type="evidence" value="ECO:0000318"/>
    <property type="project" value="GO_Central"/>
</dbReference>
<dbReference type="GO" id="GO:0043093">
    <property type="term" value="P:FtsZ-dependent cytokinesis"/>
    <property type="evidence" value="ECO:0007669"/>
    <property type="project" value="UniProtKB-UniRule"/>
</dbReference>
<dbReference type="GO" id="GO:0030435">
    <property type="term" value="P:sporulation resulting in formation of a cellular spore"/>
    <property type="evidence" value="ECO:0007669"/>
    <property type="project" value="UniProtKB-KW"/>
</dbReference>
<dbReference type="CDD" id="cd24048">
    <property type="entry name" value="ASKHA_NBD_FtsA"/>
    <property type="match status" value="1"/>
</dbReference>
<dbReference type="FunFam" id="3.30.420.40:FF:000143">
    <property type="entry name" value="Cell division protein FtsA"/>
    <property type="match status" value="1"/>
</dbReference>
<dbReference type="Gene3D" id="3.30.420.40">
    <property type="match status" value="2"/>
</dbReference>
<dbReference type="HAMAP" id="MF_02033">
    <property type="entry name" value="FtsA"/>
    <property type="match status" value="1"/>
</dbReference>
<dbReference type="InterPro" id="IPR043129">
    <property type="entry name" value="ATPase_NBD"/>
</dbReference>
<dbReference type="InterPro" id="IPR020823">
    <property type="entry name" value="Cell_div_FtsA"/>
</dbReference>
<dbReference type="InterPro" id="IPR050696">
    <property type="entry name" value="FtsA/MreB"/>
</dbReference>
<dbReference type="InterPro" id="IPR003494">
    <property type="entry name" value="SHS2_FtsA"/>
</dbReference>
<dbReference type="NCBIfam" id="TIGR01174">
    <property type="entry name" value="ftsA"/>
    <property type="match status" value="1"/>
</dbReference>
<dbReference type="PANTHER" id="PTHR32432:SF4">
    <property type="entry name" value="CELL DIVISION PROTEIN FTSA"/>
    <property type="match status" value="1"/>
</dbReference>
<dbReference type="PANTHER" id="PTHR32432">
    <property type="entry name" value="CELL DIVISION PROTEIN FTSA-RELATED"/>
    <property type="match status" value="1"/>
</dbReference>
<dbReference type="Pfam" id="PF14450">
    <property type="entry name" value="FtsA"/>
    <property type="match status" value="1"/>
</dbReference>
<dbReference type="Pfam" id="PF02491">
    <property type="entry name" value="SHS2_FTSA"/>
    <property type="match status" value="1"/>
</dbReference>
<dbReference type="PIRSF" id="PIRSF003101">
    <property type="entry name" value="FtsA"/>
    <property type="match status" value="1"/>
</dbReference>
<dbReference type="SMART" id="SM00842">
    <property type="entry name" value="FtsA"/>
    <property type="match status" value="1"/>
</dbReference>
<dbReference type="SUPFAM" id="SSF53067">
    <property type="entry name" value="Actin-like ATPase domain"/>
    <property type="match status" value="2"/>
</dbReference>
<name>FTSA_BACSU</name>